<feature type="chain" id="PRO_0000321014" description="Protein translocase subunit SecA 2">
    <location>
        <begin position="1"/>
        <end position="796"/>
    </location>
</feature>
<feature type="binding site" evidence="1">
    <location>
        <position position="84"/>
    </location>
    <ligand>
        <name>ATP</name>
        <dbReference type="ChEBI" id="CHEBI:30616"/>
    </ligand>
</feature>
<feature type="binding site" evidence="1">
    <location>
        <begin position="102"/>
        <end position="106"/>
    </location>
    <ligand>
        <name>ATP</name>
        <dbReference type="ChEBI" id="CHEBI:30616"/>
    </ligand>
</feature>
<feature type="binding site" evidence="1">
    <location>
        <position position="496"/>
    </location>
    <ligand>
        <name>ATP</name>
        <dbReference type="ChEBI" id="CHEBI:30616"/>
    </ligand>
</feature>
<proteinExistence type="inferred from homology"/>
<protein>
    <recommendedName>
        <fullName evidence="1">Protein translocase subunit SecA 2</fullName>
        <ecNumber evidence="1">7.4.2.8</ecNumber>
    </recommendedName>
</protein>
<sequence length="796" mass="90930">MKHKLDVTINELRLKSIRKIVKRINTWSDEVKSYSDDALKQKTIEFKERLASGVDTLDTLLPEAYAVAREASWRVLGMYPKEVQLIGAIVLHEGNIAEMQTGEGKTLTATMPLYLNALSGKGTYLITTNDYLAKRDFEEMQPLYEWLGLTASLGFVDIVDYEYQKGEKRNIYEHDIIYTTNGRLGFDYLIDNLADSAEGKFLPQLNYGIIDEVDSIILDAAQTPLVISGAPRLQSNLFHIVKEFVDTLIEDVHFKMKKTKKEIWLLNQGIEAAQSYFNVEDLYSEQAMVLVRNINLALRAQYLFESNVDYFVYNGDIVLIDRITGRMLPGTKLQAGLHQAIEAKEGMEVSTDKSVMATITFQNLFKLFESFSGMTATGKLGESEFFDLYSKIVVQVPTDKAIQRIDEPDKVFRSVDEKNIAMIHDIVELHETGRPVLLITRTAEAAEYFSKVLFQMDIPNNLLIAQNVAKEAQMIAEAGQIGSMTVATSMAGRGTDIKLGEGVEALGGLAVIIHEHMENSRVDRQLRGRSGRQGDPGSSCIYISLDDYLVKRWSDSNLAENNQLYSLDAQRLSQSNLFNRKVKQIVVKAQRISEEQGVKAREMANEFEKSISIQRDLVYEERNRVLEIDDAENQDFKALAKDVFEMFVNEEKVLTKSRVVEYIYQNLSFQFNKDVACVNFKDKQAVVTFLLEQFEKQLALNRKNMQSAYYYNIFVQKVFLKAIDSCWLEQVDYLQQLKASVNQRQNGQRNAIFEYHRVALDSFEVMTRNIKKRMVKNICQSMITFDKEGMPVIHFP</sequence>
<dbReference type="EC" id="7.4.2.8" evidence="1"/>
<dbReference type="EMBL" id="AP009351">
    <property type="protein sequence ID" value="BAF68820.1"/>
    <property type="molecule type" value="Genomic_DNA"/>
</dbReference>
<dbReference type="RefSeq" id="WP_000680947.1">
    <property type="nucleotide sequence ID" value="NZ_JBBIAE010000005.1"/>
</dbReference>
<dbReference type="SMR" id="A6QKD8"/>
<dbReference type="KEGG" id="sae:NWMN_2548"/>
<dbReference type="HOGENOM" id="CLU_005314_3_2_9"/>
<dbReference type="Proteomes" id="UP000006386">
    <property type="component" value="Chromosome"/>
</dbReference>
<dbReference type="GO" id="GO:0031522">
    <property type="term" value="C:cell envelope Sec protein transport complex"/>
    <property type="evidence" value="ECO:0007669"/>
    <property type="project" value="TreeGrafter"/>
</dbReference>
<dbReference type="GO" id="GO:0005829">
    <property type="term" value="C:cytosol"/>
    <property type="evidence" value="ECO:0007669"/>
    <property type="project" value="TreeGrafter"/>
</dbReference>
<dbReference type="GO" id="GO:0005886">
    <property type="term" value="C:plasma membrane"/>
    <property type="evidence" value="ECO:0007669"/>
    <property type="project" value="UniProtKB-SubCell"/>
</dbReference>
<dbReference type="GO" id="GO:0005524">
    <property type="term" value="F:ATP binding"/>
    <property type="evidence" value="ECO:0007669"/>
    <property type="project" value="UniProtKB-UniRule"/>
</dbReference>
<dbReference type="GO" id="GO:0008564">
    <property type="term" value="F:protein-exporting ATPase activity"/>
    <property type="evidence" value="ECO:0007669"/>
    <property type="project" value="UniProtKB-EC"/>
</dbReference>
<dbReference type="GO" id="GO:0065002">
    <property type="term" value="P:intracellular protein transmembrane transport"/>
    <property type="evidence" value="ECO:0007669"/>
    <property type="project" value="UniProtKB-UniRule"/>
</dbReference>
<dbReference type="GO" id="GO:0017038">
    <property type="term" value="P:protein import"/>
    <property type="evidence" value="ECO:0007669"/>
    <property type="project" value="InterPro"/>
</dbReference>
<dbReference type="GO" id="GO:0006605">
    <property type="term" value="P:protein targeting"/>
    <property type="evidence" value="ECO:0007669"/>
    <property type="project" value="UniProtKB-UniRule"/>
</dbReference>
<dbReference type="GO" id="GO:0043952">
    <property type="term" value="P:protein transport by the Sec complex"/>
    <property type="evidence" value="ECO:0007669"/>
    <property type="project" value="TreeGrafter"/>
</dbReference>
<dbReference type="CDD" id="cd17928">
    <property type="entry name" value="DEXDc_SecA"/>
    <property type="match status" value="1"/>
</dbReference>
<dbReference type="CDD" id="cd18803">
    <property type="entry name" value="SF2_C_secA"/>
    <property type="match status" value="1"/>
</dbReference>
<dbReference type="FunFam" id="3.40.50.300:FF:000429">
    <property type="entry name" value="Preprotein translocase subunit SecA"/>
    <property type="match status" value="1"/>
</dbReference>
<dbReference type="FunFam" id="3.40.50.300:FF:001575">
    <property type="entry name" value="Protein translocase subunit SecA 2"/>
    <property type="match status" value="1"/>
</dbReference>
<dbReference type="Gene3D" id="1.10.3060.10">
    <property type="entry name" value="Helical scaffold and wing domains of SecA"/>
    <property type="match status" value="1"/>
</dbReference>
<dbReference type="Gene3D" id="3.40.50.300">
    <property type="entry name" value="P-loop containing nucleotide triphosphate hydrolases"/>
    <property type="match status" value="2"/>
</dbReference>
<dbReference type="Gene3D" id="3.90.1440.10">
    <property type="entry name" value="SecA, preprotein cross-linking domain"/>
    <property type="match status" value="1"/>
</dbReference>
<dbReference type="HAMAP" id="MF_01382">
    <property type="entry name" value="SecA"/>
    <property type="match status" value="1"/>
</dbReference>
<dbReference type="InterPro" id="IPR014001">
    <property type="entry name" value="Helicase_ATP-bd"/>
</dbReference>
<dbReference type="InterPro" id="IPR001650">
    <property type="entry name" value="Helicase_C-like"/>
</dbReference>
<dbReference type="InterPro" id="IPR027417">
    <property type="entry name" value="P-loop_NTPase"/>
</dbReference>
<dbReference type="InterPro" id="IPR000185">
    <property type="entry name" value="SecA"/>
</dbReference>
<dbReference type="InterPro" id="IPR022490">
    <property type="entry name" value="SecA2"/>
</dbReference>
<dbReference type="InterPro" id="IPR011115">
    <property type="entry name" value="SecA_DEAD"/>
</dbReference>
<dbReference type="InterPro" id="IPR014018">
    <property type="entry name" value="SecA_motor_DEAD"/>
</dbReference>
<dbReference type="InterPro" id="IPR011130">
    <property type="entry name" value="SecA_preprotein_X-link_dom"/>
</dbReference>
<dbReference type="InterPro" id="IPR044722">
    <property type="entry name" value="SecA_SF2_C"/>
</dbReference>
<dbReference type="InterPro" id="IPR011116">
    <property type="entry name" value="SecA_Wing/Scaffold"/>
</dbReference>
<dbReference type="InterPro" id="IPR036266">
    <property type="entry name" value="SecA_Wing/Scaffold_sf"/>
</dbReference>
<dbReference type="InterPro" id="IPR036670">
    <property type="entry name" value="SecA_X-link_sf"/>
</dbReference>
<dbReference type="NCBIfam" id="NF006630">
    <property type="entry name" value="PRK09200.1"/>
    <property type="match status" value="1"/>
</dbReference>
<dbReference type="NCBIfam" id="TIGR03714">
    <property type="entry name" value="secA2"/>
    <property type="match status" value="1"/>
</dbReference>
<dbReference type="PANTHER" id="PTHR30612:SF0">
    <property type="entry name" value="CHLOROPLAST PROTEIN-TRANSPORTING ATPASE"/>
    <property type="match status" value="1"/>
</dbReference>
<dbReference type="PANTHER" id="PTHR30612">
    <property type="entry name" value="SECA INNER MEMBRANE COMPONENT OF SEC PROTEIN SECRETION SYSTEM"/>
    <property type="match status" value="1"/>
</dbReference>
<dbReference type="Pfam" id="PF21090">
    <property type="entry name" value="P-loop_SecA"/>
    <property type="match status" value="1"/>
</dbReference>
<dbReference type="Pfam" id="PF07517">
    <property type="entry name" value="SecA_DEAD"/>
    <property type="match status" value="1"/>
</dbReference>
<dbReference type="Pfam" id="PF01043">
    <property type="entry name" value="SecA_PP_bind"/>
    <property type="match status" value="1"/>
</dbReference>
<dbReference type="Pfam" id="PF07516">
    <property type="entry name" value="SecA_SW"/>
    <property type="match status" value="1"/>
</dbReference>
<dbReference type="PRINTS" id="PR00906">
    <property type="entry name" value="SECA"/>
</dbReference>
<dbReference type="SMART" id="SM00957">
    <property type="entry name" value="SecA_DEAD"/>
    <property type="match status" value="1"/>
</dbReference>
<dbReference type="SMART" id="SM00958">
    <property type="entry name" value="SecA_PP_bind"/>
    <property type="match status" value="1"/>
</dbReference>
<dbReference type="SUPFAM" id="SSF81886">
    <property type="entry name" value="Helical scaffold and wing domains of SecA"/>
    <property type="match status" value="1"/>
</dbReference>
<dbReference type="SUPFAM" id="SSF52540">
    <property type="entry name" value="P-loop containing nucleoside triphosphate hydrolases"/>
    <property type="match status" value="2"/>
</dbReference>
<dbReference type="SUPFAM" id="SSF81767">
    <property type="entry name" value="Pre-protein crosslinking domain of SecA"/>
    <property type="match status" value="1"/>
</dbReference>
<dbReference type="PROSITE" id="PS51196">
    <property type="entry name" value="SECA_MOTOR_DEAD"/>
    <property type="match status" value="1"/>
</dbReference>
<comment type="function">
    <text evidence="1">Part of the Sec protein translocase complex. Interacts with the SecYEG preprotein conducting channel. Has a central role in coupling the hydrolysis of ATP to the transfer of proteins into and across the cell membrane, serving as an ATP-driven molecular motor driving the stepwise translocation of polypeptide chains across the membrane.</text>
</comment>
<comment type="catalytic activity">
    <reaction evidence="1">
        <text>ATP + H2O + cellular proteinSide 1 = ADP + phosphate + cellular proteinSide 2.</text>
        <dbReference type="EC" id="7.4.2.8"/>
    </reaction>
</comment>
<comment type="subunit">
    <text evidence="1">Monomer and homodimer. Part of the essential Sec protein translocation apparatus which comprises SecA, SecYEG and auxiliary proteins SecDF. Other proteins may also be involved.</text>
</comment>
<comment type="subcellular location">
    <subcellularLocation>
        <location evidence="1">Cell membrane</location>
        <topology evidence="1">Peripheral membrane protein</topology>
        <orientation evidence="1">Cytoplasmic side</orientation>
    </subcellularLocation>
    <subcellularLocation>
        <location evidence="1">Cytoplasm</location>
    </subcellularLocation>
    <text evidence="1">Distribution is 50-50.</text>
</comment>
<comment type="similarity">
    <text evidence="1">Belongs to the SecA family.</text>
</comment>
<accession>A6QKD8</accession>
<evidence type="ECO:0000255" key="1">
    <source>
        <dbReference type="HAMAP-Rule" id="MF_01382"/>
    </source>
</evidence>
<keyword id="KW-0067">ATP-binding</keyword>
<keyword id="KW-1003">Cell membrane</keyword>
<keyword id="KW-0963">Cytoplasm</keyword>
<keyword id="KW-0472">Membrane</keyword>
<keyword id="KW-0547">Nucleotide-binding</keyword>
<keyword id="KW-0653">Protein transport</keyword>
<keyword id="KW-1278">Translocase</keyword>
<keyword id="KW-0811">Translocation</keyword>
<keyword id="KW-0813">Transport</keyword>
<reference key="1">
    <citation type="journal article" date="2008" name="J. Bacteriol.">
        <title>Genome sequence of Staphylococcus aureus strain Newman and comparative analysis of staphylococcal genomes: polymorphism and evolution of two major pathogenicity islands.</title>
        <authorList>
            <person name="Baba T."/>
            <person name="Bae T."/>
            <person name="Schneewind O."/>
            <person name="Takeuchi F."/>
            <person name="Hiramatsu K."/>
        </authorList>
    </citation>
    <scope>NUCLEOTIDE SEQUENCE [LARGE SCALE GENOMIC DNA]</scope>
    <source>
        <strain>Newman</strain>
    </source>
</reference>
<organism>
    <name type="scientific">Staphylococcus aureus (strain Newman)</name>
    <dbReference type="NCBI Taxonomy" id="426430"/>
    <lineage>
        <taxon>Bacteria</taxon>
        <taxon>Bacillati</taxon>
        <taxon>Bacillota</taxon>
        <taxon>Bacilli</taxon>
        <taxon>Bacillales</taxon>
        <taxon>Staphylococcaceae</taxon>
        <taxon>Staphylococcus</taxon>
    </lineage>
</organism>
<name>SECA2_STAAE</name>
<gene>
    <name evidence="1" type="primary">secA2</name>
    <name type="ordered locus">NWMN_2548</name>
</gene>